<organism>
    <name type="scientific">Anaeromyxobacter dehalogenans (strain 2CP-C)</name>
    <dbReference type="NCBI Taxonomy" id="290397"/>
    <lineage>
        <taxon>Bacteria</taxon>
        <taxon>Pseudomonadati</taxon>
        <taxon>Myxococcota</taxon>
        <taxon>Myxococcia</taxon>
        <taxon>Myxococcales</taxon>
        <taxon>Cystobacterineae</taxon>
        <taxon>Anaeromyxobacteraceae</taxon>
        <taxon>Anaeromyxobacter</taxon>
    </lineage>
</organism>
<gene>
    <name evidence="1" type="primary">coaD</name>
    <name type="ordered locus">Adeh_1732</name>
</gene>
<sequence length="164" mass="18382">MNRAAIYPGSFDPLTNGHLAIIQRGLNLFDRLVVAVANNPQKSPMFTVDERKALIREAVGNDPRVEVDSFDGLMVDYARTRGIPKVLRGLRAVSDFEYEFQLANMNKKLLPEFESVFVMTGEDYFFVSARLVREVAVFGGNVEGLVPPNVLEALQRKLGRPPRT</sequence>
<comment type="function">
    <text evidence="1">Reversibly transfers an adenylyl group from ATP to 4'-phosphopantetheine, yielding dephospho-CoA (dPCoA) and pyrophosphate.</text>
</comment>
<comment type="catalytic activity">
    <reaction evidence="1">
        <text>(R)-4'-phosphopantetheine + ATP + H(+) = 3'-dephospho-CoA + diphosphate</text>
        <dbReference type="Rhea" id="RHEA:19801"/>
        <dbReference type="ChEBI" id="CHEBI:15378"/>
        <dbReference type="ChEBI" id="CHEBI:30616"/>
        <dbReference type="ChEBI" id="CHEBI:33019"/>
        <dbReference type="ChEBI" id="CHEBI:57328"/>
        <dbReference type="ChEBI" id="CHEBI:61723"/>
        <dbReference type="EC" id="2.7.7.3"/>
    </reaction>
</comment>
<comment type="cofactor">
    <cofactor evidence="1">
        <name>Mg(2+)</name>
        <dbReference type="ChEBI" id="CHEBI:18420"/>
    </cofactor>
</comment>
<comment type="pathway">
    <text evidence="1">Cofactor biosynthesis; coenzyme A biosynthesis; CoA from (R)-pantothenate: step 4/5.</text>
</comment>
<comment type="subunit">
    <text evidence="1">Homohexamer.</text>
</comment>
<comment type="subcellular location">
    <subcellularLocation>
        <location evidence="1">Cytoplasm</location>
    </subcellularLocation>
</comment>
<comment type="similarity">
    <text evidence="1">Belongs to the bacterial CoaD family.</text>
</comment>
<evidence type="ECO:0000255" key="1">
    <source>
        <dbReference type="HAMAP-Rule" id="MF_00151"/>
    </source>
</evidence>
<proteinExistence type="inferred from homology"/>
<reference key="1">
    <citation type="submission" date="2006-01" db="EMBL/GenBank/DDBJ databases">
        <title>Complete sequence of Anaeromyxobacter dehalogenans 2CP-C.</title>
        <authorList>
            <person name="Copeland A."/>
            <person name="Lucas S."/>
            <person name="Lapidus A."/>
            <person name="Barry K."/>
            <person name="Detter J.C."/>
            <person name="Glavina T."/>
            <person name="Hammon N."/>
            <person name="Israni S."/>
            <person name="Pitluck S."/>
            <person name="Brettin T."/>
            <person name="Bruce D."/>
            <person name="Han C."/>
            <person name="Tapia R."/>
            <person name="Gilna P."/>
            <person name="Kiss H."/>
            <person name="Schmutz J."/>
            <person name="Larimer F."/>
            <person name="Land M."/>
            <person name="Kyrpides N."/>
            <person name="Anderson I."/>
            <person name="Sanford R.A."/>
            <person name="Ritalahti K.M."/>
            <person name="Thomas H.S."/>
            <person name="Kirby J.R."/>
            <person name="Zhulin I.B."/>
            <person name="Loeffler F.E."/>
            <person name="Richardson P."/>
        </authorList>
    </citation>
    <scope>NUCLEOTIDE SEQUENCE [LARGE SCALE GENOMIC DNA]</scope>
    <source>
        <strain>2CP-C</strain>
    </source>
</reference>
<protein>
    <recommendedName>
        <fullName evidence="1">Phosphopantetheine adenylyltransferase</fullName>
        <ecNumber evidence="1">2.7.7.3</ecNumber>
    </recommendedName>
    <alternativeName>
        <fullName evidence="1">Dephospho-CoA pyrophosphorylase</fullName>
    </alternativeName>
    <alternativeName>
        <fullName evidence="1">Pantetheine-phosphate adenylyltransferase</fullName>
        <shortName evidence="1">PPAT</shortName>
    </alternativeName>
</protein>
<accession>Q2IIM3</accession>
<name>COAD_ANADE</name>
<dbReference type="EC" id="2.7.7.3" evidence="1"/>
<dbReference type="EMBL" id="CP000251">
    <property type="protein sequence ID" value="ABC81505.1"/>
    <property type="molecule type" value="Genomic_DNA"/>
</dbReference>
<dbReference type="RefSeq" id="WP_011420788.1">
    <property type="nucleotide sequence ID" value="NC_007760.1"/>
</dbReference>
<dbReference type="SMR" id="Q2IIM3"/>
<dbReference type="STRING" id="290397.Adeh_1732"/>
<dbReference type="KEGG" id="ade:Adeh_1732"/>
<dbReference type="eggNOG" id="COG0669">
    <property type="taxonomic scope" value="Bacteria"/>
</dbReference>
<dbReference type="HOGENOM" id="CLU_100149_0_1_7"/>
<dbReference type="OrthoDB" id="9806661at2"/>
<dbReference type="UniPathway" id="UPA00241">
    <property type="reaction ID" value="UER00355"/>
</dbReference>
<dbReference type="Proteomes" id="UP000001935">
    <property type="component" value="Chromosome"/>
</dbReference>
<dbReference type="GO" id="GO:0005737">
    <property type="term" value="C:cytoplasm"/>
    <property type="evidence" value="ECO:0007669"/>
    <property type="project" value="UniProtKB-SubCell"/>
</dbReference>
<dbReference type="GO" id="GO:0005524">
    <property type="term" value="F:ATP binding"/>
    <property type="evidence" value="ECO:0007669"/>
    <property type="project" value="UniProtKB-KW"/>
</dbReference>
<dbReference type="GO" id="GO:0004595">
    <property type="term" value="F:pantetheine-phosphate adenylyltransferase activity"/>
    <property type="evidence" value="ECO:0007669"/>
    <property type="project" value="UniProtKB-UniRule"/>
</dbReference>
<dbReference type="GO" id="GO:0015937">
    <property type="term" value="P:coenzyme A biosynthetic process"/>
    <property type="evidence" value="ECO:0007669"/>
    <property type="project" value="UniProtKB-UniRule"/>
</dbReference>
<dbReference type="CDD" id="cd02163">
    <property type="entry name" value="PPAT"/>
    <property type="match status" value="1"/>
</dbReference>
<dbReference type="Gene3D" id="3.40.50.620">
    <property type="entry name" value="HUPs"/>
    <property type="match status" value="1"/>
</dbReference>
<dbReference type="HAMAP" id="MF_00151">
    <property type="entry name" value="PPAT_bact"/>
    <property type="match status" value="1"/>
</dbReference>
<dbReference type="InterPro" id="IPR004821">
    <property type="entry name" value="Cyt_trans-like"/>
</dbReference>
<dbReference type="InterPro" id="IPR001980">
    <property type="entry name" value="PPAT"/>
</dbReference>
<dbReference type="InterPro" id="IPR014729">
    <property type="entry name" value="Rossmann-like_a/b/a_fold"/>
</dbReference>
<dbReference type="NCBIfam" id="TIGR01510">
    <property type="entry name" value="coaD_prev_kdtB"/>
    <property type="match status" value="1"/>
</dbReference>
<dbReference type="NCBIfam" id="TIGR00125">
    <property type="entry name" value="cyt_tran_rel"/>
    <property type="match status" value="1"/>
</dbReference>
<dbReference type="PANTHER" id="PTHR21342">
    <property type="entry name" value="PHOSPHOPANTETHEINE ADENYLYLTRANSFERASE"/>
    <property type="match status" value="1"/>
</dbReference>
<dbReference type="PANTHER" id="PTHR21342:SF1">
    <property type="entry name" value="PHOSPHOPANTETHEINE ADENYLYLTRANSFERASE"/>
    <property type="match status" value="1"/>
</dbReference>
<dbReference type="Pfam" id="PF01467">
    <property type="entry name" value="CTP_transf_like"/>
    <property type="match status" value="1"/>
</dbReference>
<dbReference type="PRINTS" id="PR01020">
    <property type="entry name" value="LPSBIOSNTHSS"/>
</dbReference>
<dbReference type="SUPFAM" id="SSF52374">
    <property type="entry name" value="Nucleotidylyl transferase"/>
    <property type="match status" value="1"/>
</dbReference>
<feature type="chain" id="PRO_1000096760" description="Phosphopantetheine adenylyltransferase">
    <location>
        <begin position="1"/>
        <end position="164"/>
    </location>
</feature>
<feature type="binding site" evidence="1">
    <location>
        <begin position="10"/>
        <end position="11"/>
    </location>
    <ligand>
        <name>ATP</name>
        <dbReference type="ChEBI" id="CHEBI:30616"/>
    </ligand>
</feature>
<feature type="binding site" evidence="1">
    <location>
        <position position="10"/>
    </location>
    <ligand>
        <name>substrate</name>
    </ligand>
</feature>
<feature type="binding site" evidence="1">
    <location>
        <position position="18"/>
    </location>
    <ligand>
        <name>ATP</name>
        <dbReference type="ChEBI" id="CHEBI:30616"/>
    </ligand>
</feature>
<feature type="binding site" evidence="1">
    <location>
        <position position="42"/>
    </location>
    <ligand>
        <name>substrate</name>
    </ligand>
</feature>
<feature type="binding site" evidence="1">
    <location>
        <position position="74"/>
    </location>
    <ligand>
        <name>substrate</name>
    </ligand>
</feature>
<feature type="binding site" evidence="1">
    <location>
        <position position="88"/>
    </location>
    <ligand>
        <name>substrate</name>
    </ligand>
</feature>
<feature type="binding site" evidence="1">
    <location>
        <begin position="89"/>
        <end position="91"/>
    </location>
    <ligand>
        <name>ATP</name>
        <dbReference type="ChEBI" id="CHEBI:30616"/>
    </ligand>
</feature>
<feature type="binding site" evidence="1">
    <location>
        <position position="99"/>
    </location>
    <ligand>
        <name>ATP</name>
        <dbReference type="ChEBI" id="CHEBI:30616"/>
    </ligand>
</feature>
<feature type="binding site" evidence="1">
    <location>
        <begin position="124"/>
        <end position="130"/>
    </location>
    <ligand>
        <name>ATP</name>
        <dbReference type="ChEBI" id="CHEBI:30616"/>
    </ligand>
</feature>
<feature type="site" description="Transition state stabilizer" evidence="1">
    <location>
        <position position="18"/>
    </location>
</feature>
<keyword id="KW-0067">ATP-binding</keyword>
<keyword id="KW-0173">Coenzyme A biosynthesis</keyword>
<keyword id="KW-0963">Cytoplasm</keyword>
<keyword id="KW-0460">Magnesium</keyword>
<keyword id="KW-0547">Nucleotide-binding</keyword>
<keyword id="KW-0548">Nucleotidyltransferase</keyword>
<keyword id="KW-1185">Reference proteome</keyword>
<keyword id="KW-0808">Transferase</keyword>